<comment type="function">
    <text evidence="1">One of the primary rRNA binding proteins, it binds directly to 16S rRNA central domain where it helps coordinate assembly of the platform of the 30S subunit.</text>
</comment>
<comment type="subunit">
    <text evidence="1">Part of the 30S ribosomal subunit. Contacts proteins S5 and S12.</text>
</comment>
<comment type="similarity">
    <text evidence="1">Belongs to the universal ribosomal protein uS8 family.</text>
</comment>
<organism>
    <name type="scientific">Chlorobaculum parvum (strain DSM 263 / NCIMB 8327)</name>
    <name type="common">Chlorobium vibrioforme subsp. thiosulfatophilum</name>
    <dbReference type="NCBI Taxonomy" id="517417"/>
    <lineage>
        <taxon>Bacteria</taxon>
        <taxon>Pseudomonadati</taxon>
        <taxon>Chlorobiota</taxon>
        <taxon>Chlorobiia</taxon>
        <taxon>Chlorobiales</taxon>
        <taxon>Chlorobiaceae</taxon>
        <taxon>Chlorobaculum</taxon>
    </lineage>
</organism>
<gene>
    <name evidence="1" type="primary">rpsH</name>
    <name type="ordered locus">Cpar_0191</name>
</gene>
<proteinExistence type="inferred from homology"/>
<keyword id="KW-0687">Ribonucleoprotein</keyword>
<keyword id="KW-0689">Ribosomal protein</keyword>
<keyword id="KW-0694">RNA-binding</keyword>
<keyword id="KW-0699">rRNA-binding</keyword>
<dbReference type="EMBL" id="CP001099">
    <property type="protein sequence ID" value="ACF10618.1"/>
    <property type="molecule type" value="Genomic_DNA"/>
</dbReference>
<dbReference type="RefSeq" id="WP_012501453.1">
    <property type="nucleotide sequence ID" value="NC_011027.1"/>
</dbReference>
<dbReference type="SMR" id="B3QR79"/>
<dbReference type="STRING" id="517417.Cpar_0191"/>
<dbReference type="KEGG" id="cpc:Cpar_0191"/>
<dbReference type="eggNOG" id="COG0096">
    <property type="taxonomic scope" value="Bacteria"/>
</dbReference>
<dbReference type="HOGENOM" id="CLU_098428_0_2_10"/>
<dbReference type="OrthoDB" id="9802617at2"/>
<dbReference type="Proteomes" id="UP000008811">
    <property type="component" value="Chromosome"/>
</dbReference>
<dbReference type="GO" id="GO:1990904">
    <property type="term" value="C:ribonucleoprotein complex"/>
    <property type="evidence" value="ECO:0007669"/>
    <property type="project" value="UniProtKB-KW"/>
</dbReference>
<dbReference type="GO" id="GO:0005840">
    <property type="term" value="C:ribosome"/>
    <property type="evidence" value="ECO:0007669"/>
    <property type="project" value="UniProtKB-KW"/>
</dbReference>
<dbReference type="GO" id="GO:0019843">
    <property type="term" value="F:rRNA binding"/>
    <property type="evidence" value="ECO:0007669"/>
    <property type="project" value="UniProtKB-UniRule"/>
</dbReference>
<dbReference type="GO" id="GO:0003735">
    <property type="term" value="F:structural constituent of ribosome"/>
    <property type="evidence" value="ECO:0007669"/>
    <property type="project" value="InterPro"/>
</dbReference>
<dbReference type="GO" id="GO:0006412">
    <property type="term" value="P:translation"/>
    <property type="evidence" value="ECO:0007669"/>
    <property type="project" value="UniProtKB-UniRule"/>
</dbReference>
<dbReference type="FunFam" id="3.30.1490.10:FF:000001">
    <property type="entry name" value="30S ribosomal protein S8"/>
    <property type="match status" value="1"/>
</dbReference>
<dbReference type="Gene3D" id="3.30.1370.30">
    <property type="match status" value="1"/>
</dbReference>
<dbReference type="Gene3D" id="3.30.1490.10">
    <property type="match status" value="1"/>
</dbReference>
<dbReference type="HAMAP" id="MF_01302_B">
    <property type="entry name" value="Ribosomal_uS8_B"/>
    <property type="match status" value="1"/>
</dbReference>
<dbReference type="InterPro" id="IPR000630">
    <property type="entry name" value="Ribosomal_uS8"/>
</dbReference>
<dbReference type="InterPro" id="IPR047863">
    <property type="entry name" value="Ribosomal_uS8_CS"/>
</dbReference>
<dbReference type="InterPro" id="IPR035987">
    <property type="entry name" value="Ribosomal_uS8_sf"/>
</dbReference>
<dbReference type="NCBIfam" id="NF001109">
    <property type="entry name" value="PRK00136.1"/>
    <property type="match status" value="1"/>
</dbReference>
<dbReference type="PANTHER" id="PTHR11758">
    <property type="entry name" value="40S RIBOSOMAL PROTEIN S15A"/>
    <property type="match status" value="1"/>
</dbReference>
<dbReference type="Pfam" id="PF00410">
    <property type="entry name" value="Ribosomal_S8"/>
    <property type="match status" value="1"/>
</dbReference>
<dbReference type="SUPFAM" id="SSF56047">
    <property type="entry name" value="Ribosomal protein S8"/>
    <property type="match status" value="1"/>
</dbReference>
<dbReference type="PROSITE" id="PS00053">
    <property type="entry name" value="RIBOSOMAL_S8"/>
    <property type="match status" value="1"/>
</dbReference>
<protein>
    <recommendedName>
        <fullName evidence="1">Small ribosomal subunit protein uS8</fullName>
    </recommendedName>
    <alternativeName>
        <fullName evidence="2">30S ribosomal protein S8</fullName>
    </alternativeName>
</protein>
<evidence type="ECO:0000255" key="1">
    <source>
        <dbReference type="HAMAP-Rule" id="MF_01302"/>
    </source>
</evidence>
<evidence type="ECO:0000305" key="2"/>
<accession>B3QR79</accession>
<name>RS8_CHLP8</name>
<reference key="1">
    <citation type="submission" date="2008-06" db="EMBL/GenBank/DDBJ databases">
        <title>Complete sequence of Chlorobaculum parvum NCIB 8327.</title>
        <authorList>
            <consortium name="US DOE Joint Genome Institute"/>
            <person name="Lucas S."/>
            <person name="Copeland A."/>
            <person name="Lapidus A."/>
            <person name="Glavina del Rio T."/>
            <person name="Dalin E."/>
            <person name="Tice H."/>
            <person name="Bruce D."/>
            <person name="Goodwin L."/>
            <person name="Pitluck S."/>
            <person name="Schmutz J."/>
            <person name="Larimer F."/>
            <person name="Land M."/>
            <person name="Hauser L."/>
            <person name="Kyrpides N."/>
            <person name="Mikhailova N."/>
            <person name="Zhao F."/>
            <person name="Li T."/>
            <person name="Liu Z."/>
            <person name="Overmann J."/>
            <person name="Bryant D.A."/>
            <person name="Richardson P."/>
        </authorList>
    </citation>
    <scope>NUCLEOTIDE SEQUENCE [LARGE SCALE GENOMIC DNA]</scope>
    <source>
        <strain>DSM 263 / NCIMB 8327</strain>
    </source>
</reference>
<feature type="chain" id="PRO_1000140529" description="Small ribosomal subunit protein uS8">
    <location>
        <begin position="1"/>
        <end position="133"/>
    </location>
</feature>
<sequence>MPVTDSIADFITRIRNAGSAKNKTTDIPYTRVRENLSKLLVEKGYIQNYTVIKTEADKFPFIRVELKYTADGRHAIKEISRVSSPGRRVYQGKDIKRYLGGLGLFILSTSKGILTDKEAREQNVGGEVLFRIY</sequence>